<comment type="function">
    <text evidence="1">Plays a role in virus cell tropism, and may be required for efficient virus replication in macrophages.</text>
</comment>
<comment type="induction">
    <text evidence="2">Expressed in the early phase of the viral replicative cycle.</text>
</comment>
<comment type="similarity">
    <text evidence="2">Belongs to the asfivirus MGF 360 family.</text>
</comment>
<accession>P0C9N8</accession>
<reference key="1">
    <citation type="submission" date="2003-03" db="EMBL/GenBank/DDBJ databases">
        <title>African swine fever virus genomes.</title>
        <authorList>
            <person name="Kutish G.F."/>
            <person name="Rock D.L."/>
        </authorList>
    </citation>
    <scope>NUCLEOTIDE SEQUENCE [LARGE SCALE GENOMIC DNA]</scope>
</reference>
<feature type="chain" id="PRO_0000373265" description="Protein MGF 360-8L">
    <location>
        <begin position="1"/>
        <end position="357"/>
    </location>
</feature>
<organism>
    <name type="scientific">African swine fever virus (isolate Tick/South Africa/Pretoriuskop Pr4/1996)</name>
    <name type="common">ASFV</name>
    <dbReference type="NCBI Taxonomy" id="561443"/>
    <lineage>
        <taxon>Viruses</taxon>
        <taxon>Varidnaviria</taxon>
        <taxon>Bamfordvirae</taxon>
        <taxon>Nucleocytoviricota</taxon>
        <taxon>Pokkesviricetes</taxon>
        <taxon>Asfuvirales</taxon>
        <taxon>Asfarviridae</taxon>
        <taxon>Asfivirus</taxon>
        <taxon>African swine fever virus</taxon>
    </lineage>
</organism>
<protein>
    <recommendedName>
        <fullName>Protein MGF 360-8L</fullName>
    </recommendedName>
</protein>
<proteinExistence type="inferred from homology"/>
<keyword id="KW-0244">Early protein</keyword>
<evidence type="ECO:0000250" key="1">
    <source>
        <dbReference type="UniProtKB" id="P23162"/>
    </source>
</evidence>
<evidence type="ECO:0000305" key="2"/>
<organismHost>
    <name type="scientific">Ornithodoros</name>
    <name type="common">relapsing fever ticks</name>
    <dbReference type="NCBI Taxonomy" id="6937"/>
</organismHost>
<organismHost>
    <name type="scientific">Phacochoerus aethiopicus</name>
    <name type="common">Warthog</name>
    <dbReference type="NCBI Taxonomy" id="85517"/>
</organismHost>
<organismHost>
    <name type="scientific">Phacochoerus africanus</name>
    <name type="common">Warthog</name>
    <dbReference type="NCBI Taxonomy" id="41426"/>
</organismHost>
<organismHost>
    <name type="scientific">Potamochoerus larvatus</name>
    <name type="common">Bushpig</name>
    <dbReference type="NCBI Taxonomy" id="273792"/>
</organismHost>
<organismHost>
    <name type="scientific">Sus scrofa</name>
    <name type="common">Pig</name>
    <dbReference type="NCBI Taxonomy" id="9823"/>
</organismHost>
<dbReference type="EMBL" id="AY261363">
    <property type="status" value="NOT_ANNOTATED_CDS"/>
    <property type="molecule type" value="Genomic_DNA"/>
</dbReference>
<dbReference type="Proteomes" id="UP000000859">
    <property type="component" value="Segment"/>
</dbReference>
<dbReference type="GO" id="GO:0042330">
    <property type="term" value="P:taxis"/>
    <property type="evidence" value="ECO:0007669"/>
    <property type="project" value="InterPro"/>
</dbReference>
<dbReference type="InterPro" id="IPR002595">
    <property type="entry name" value="ASFV_MGF360"/>
</dbReference>
<dbReference type="Pfam" id="PF01671">
    <property type="entry name" value="ASFV_360"/>
    <property type="match status" value="1"/>
</dbReference>
<sequence>MLSLQTLAKKVVACNYLSSDYDYTLQRFGLWWDLGPIHLCNNCKQIFSYKHLQCFSEDDLCLEAALVKAVKSDNLELIRLFVDWGANPEYGLIRVPAVHLKRLCTELGGLTPVTEPRLLEILKEVAKLKSCAGVLLGYDMFCHNPLLETVTRTTLDTVTYTCSNIPLTGDTAHLLLTKFWFALALRHNFTKAIHYFYKRHKNHLYWRVACSLYFNNIFDIHELCREKEICISPNLMMKFACLQKKNYAAIYYCYRLGASLDYGMNLSIYNNNTLNMFFCIDLGATDFDRAQHIAHKAYMYNLSNIFLVKQLFSRDVTLALDVTEPQEIYDRLKSYTSKNLKRAEEYLTAHPEIIVID</sequence>
<name>3608L_ASFP4</name>
<gene>
    <name type="ordered locus">Pret-030</name>
</gene>